<feature type="chain" id="PRO_1000115708" description="Glutaminase">
    <location>
        <begin position="1"/>
        <end position="308"/>
    </location>
</feature>
<feature type="binding site" evidence="1">
    <location>
        <position position="66"/>
    </location>
    <ligand>
        <name>substrate</name>
    </ligand>
</feature>
<feature type="binding site" evidence="1">
    <location>
        <position position="117"/>
    </location>
    <ligand>
        <name>substrate</name>
    </ligand>
</feature>
<feature type="binding site" evidence="1">
    <location>
        <position position="161"/>
    </location>
    <ligand>
        <name>substrate</name>
    </ligand>
</feature>
<feature type="binding site" evidence="1">
    <location>
        <position position="168"/>
    </location>
    <ligand>
        <name>substrate</name>
    </ligand>
</feature>
<feature type="binding site" evidence="1">
    <location>
        <position position="192"/>
    </location>
    <ligand>
        <name>substrate</name>
    </ligand>
</feature>
<feature type="binding site" evidence="1">
    <location>
        <position position="244"/>
    </location>
    <ligand>
        <name>substrate</name>
    </ligand>
</feature>
<feature type="binding site" evidence="1">
    <location>
        <position position="262"/>
    </location>
    <ligand>
        <name>substrate</name>
    </ligand>
</feature>
<dbReference type="EC" id="3.5.1.2" evidence="1"/>
<dbReference type="EMBL" id="CP001120">
    <property type="protein sequence ID" value="ACF67796.1"/>
    <property type="molecule type" value="Genomic_DNA"/>
</dbReference>
<dbReference type="SMR" id="B4THV9"/>
<dbReference type="KEGG" id="seh:SeHA_C1697"/>
<dbReference type="HOGENOM" id="CLU_027932_1_1_6"/>
<dbReference type="Proteomes" id="UP000001866">
    <property type="component" value="Chromosome"/>
</dbReference>
<dbReference type="GO" id="GO:0004359">
    <property type="term" value="F:glutaminase activity"/>
    <property type="evidence" value="ECO:0007669"/>
    <property type="project" value="UniProtKB-UniRule"/>
</dbReference>
<dbReference type="GO" id="GO:0006537">
    <property type="term" value="P:glutamate biosynthetic process"/>
    <property type="evidence" value="ECO:0007669"/>
    <property type="project" value="TreeGrafter"/>
</dbReference>
<dbReference type="GO" id="GO:0006543">
    <property type="term" value="P:glutamine catabolic process"/>
    <property type="evidence" value="ECO:0007669"/>
    <property type="project" value="TreeGrafter"/>
</dbReference>
<dbReference type="FunFam" id="3.40.710.10:FF:000005">
    <property type="entry name" value="Glutaminase"/>
    <property type="match status" value="1"/>
</dbReference>
<dbReference type="Gene3D" id="3.40.710.10">
    <property type="entry name" value="DD-peptidase/beta-lactamase superfamily"/>
    <property type="match status" value="1"/>
</dbReference>
<dbReference type="HAMAP" id="MF_00313">
    <property type="entry name" value="Glutaminase"/>
    <property type="match status" value="1"/>
</dbReference>
<dbReference type="InterPro" id="IPR012338">
    <property type="entry name" value="Beta-lactam/transpept-like"/>
</dbReference>
<dbReference type="InterPro" id="IPR015868">
    <property type="entry name" value="Glutaminase"/>
</dbReference>
<dbReference type="NCBIfam" id="TIGR03814">
    <property type="entry name" value="Gln_ase"/>
    <property type="match status" value="1"/>
</dbReference>
<dbReference type="NCBIfam" id="NF002132">
    <property type="entry name" value="PRK00971.1-1"/>
    <property type="match status" value="1"/>
</dbReference>
<dbReference type="NCBIfam" id="NF002133">
    <property type="entry name" value="PRK00971.1-2"/>
    <property type="match status" value="1"/>
</dbReference>
<dbReference type="PANTHER" id="PTHR12544">
    <property type="entry name" value="GLUTAMINASE"/>
    <property type="match status" value="1"/>
</dbReference>
<dbReference type="PANTHER" id="PTHR12544:SF29">
    <property type="entry name" value="GLUTAMINASE"/>
    <property type="match status" value="1"/>
</dbReference>
<dbReference type="Pfam" id="PF04960">
    <property type="entry name" value="Glutaminase"/>
    <property type="match status" value="1"/>
</dbReference>
<dbReference type="SUPFAM" id="SSF56601">
    <property type="entry name" value="beta-lactamase/transpeptidase-like"/>
    <property type="match status" value="1"/>
</dbReference>
<keyword id="KW-0378">Hydrolase</keyword>
<organism>
    <name type="scientific">Salmonella heidelberg (strain SL476)</name>
    <dbReference type="NCBI Taxonomy" id="454169"/>
    <lineage>
        <taxon>Bacteria</taxon>
        <taxon>Pseudomonadati</taxon>
        <taxon>Pseudomonadota</taxon>
        <taxon>Gammaproteobacteria</taxon>
        <taxon>Enterobacterales</taxon>
        <taxon>Enterobacteriaceae</taxon>
        <taxon>Salmonella</taxon>
    </lineage>
</organism>
<comment type="catalytic activity">
    <reaction evidence="1">
        <text>L-glutamine + H2O = L-glutamate + NH4(+)</text>
        <dbReference type="Rhea" id="RHEA:15889"/>
        <dbReference type="ChEBI" id="CHEBI:15377"/>
        <dbReference type="ChEBI" id="CHEBI:28938"/>
        <dbReference type="ChEBI" id="CHEBI:29985"/>
        <dbReference type="ChEBI" id="CHEBI:58359"/>
        <dbReference type="EC" id="3.5.1.2"/>
    </reaction>
</comment>
<comment type="subunit">
    <text evidence="1">Homotetramer.</text>
</comment>
<comment type="similarity">
    <text evidence="1">Belongs to the glutaminase family.</text>
</comment>
<accession>B4THV9</accession>
<protein>
    <recommendedName>
        <fullName evidence="1">Glutaminase</fullName>
        <ecNumber evidence="1">3.5.1.2</ecNumber>
    </recommendedName>
</protein>
<reference key="1">
    <citation type="journal article" date="2011" name="J. Bacteriol.">
        <title>Comparative genomics of 28 Salmonella enterica isolates: evidence for CRISPR-mediated adaptive sublineage evolution.</title>
        <authorList>
            <person name="Fricke W.F."/>
            <person name="Mammel M.K."/>
            <person name="McDermott P.F."/>
            <person name="Tartera C."/>
            <person name="White D.G."/>
            <person name="Leclerc J.E."/>
            <person name="Ravel J."/>
            <person name="Cebula T.A."/>
        </authorList>
    </citation>
    <scope>NUCLEOTIDE SEQUENCE [LARGE SCALE GENOMIC DNA]</scope>
    <source>
        <strain>SL476</strain>
    </source>
</reference>
<sequence length="308" mass="33597">MARAMDNAILETILQRVRPLIGQGKVADYIPALASVEGSKLGIAICTVDGQHYQAGDAHERFSIQSISKVLSLVVAMRHYPEEEIWQRVGKDPSGSPFNSLVQLEMEQGIPRNPFINAGALVVCDMLQGRLSAPRQRMLEVVRALCGVSDITYDATVARSEFEHSARNAAIAWLMKSFGNFHHDVPTVLQNYFHYCALKMSCMELARTFVFLANQGEAFHLDEPVVTPMQARQINALMATSGMYQNAGEFAWRVGLPAKSGVGGGIVAIVPHEMAIAVWSPELDPAGNSLAGIAALEQLTQTLGRSVY</sequence>
<evidence type="ECO:0000255" key="1">
    <source>
        <dbReference type="HAMAP-Rule" id="MF_00313"/>
    </source>
</evidence>
<name>GLSA_SALHS</name>
<gene>
    <name evidence="1" type="primary">glsA</name>
    <name type="ordered locus">SeHA_C1697</name>
</gene>
<proteinExistence type="inferred from homology"/>